<feature type="chain" id="PRO_0000105939" description="Sulfate adenylyltransferase">
    <location>
        <begin position="1"/>
        <end position="397"/>
    </location>
</feature>
<feature type="strand" evidence="2">
    <location>
        <begin position="7"/>
        <end position="9"/>
    </location>
</feature>
<feature type="helix" evidence="2">
    <location>
        <begin position="18"/>
        <end position="28"/>
    </location>
</feature>
<feature type="strand" evidence="2">
    <location>
        <begin position="33"/>
        <end position="35"/>
    </location>
</feature>
<feature type="helix" evidence="2">
    <location>
        <begin position="38"/>
        <end position="48"/>
    </location>
</feature>
<feature type="turn" evidence="2">
    <location>
        <begin position="49"/>
        <end position="54"/>
    </location>
</feature>
<feature type="helix" evidence="2">
    <location>
        <begin position="61"/>
        <end position="70"/>
    </location>
</feature>
<feature type="strand" evidence="2">
    <location>
        <begin position="86"/>
        <end position="88"/>
    </location>
</feature>
<feature type="helix" evidence="2">
    <location>
        <begin position="91"/>
        <end position="93"/>
    </location>
</feature>
<feature type="strand" evidence="2">
    <location>
        <begin position="97"/>
        <end position="102"/>
    </location>
</feature>
<feature type="strand" evidence="2">
    <location>
        <begin position="111"/>
        <end position="116"/>
    </location>
</feature>
<feature type="strand" evidence="2">
    <location>
        <begin position="119"/>
        <end position="122"/>
    </location>
</feature>
<feature type="helix" evidence="2">
    <location>
        <begin position="125"/>
        <end position="136"/>
    </location>
</feature>
<feature type="helix" evidence="2">
    <location>
        <begin position="144"/>
        <end position="149"/>
    </location>
</feature>
<feature type="strand" evidence="2">
    <location>
        <begin position="154"/>
        <end position="163"/>
    </location>
</feature>
<feature type="helix" evidence="2">
    <location>
        <begin position="167"/>
        <end position="172"/>
    </location>
</feature>
<feature type="turn" evidence="2">
    <location>
        <begin position="174"/>
        <end position="176"/>
    </location>
</feature>
<feature type="helix" evidence="2">
    <location>
        <begin position="180"/>
        <end position="190"/>
    </location>
</feature>
<feature type="strand" evidence="2">
    <location>
        <begin position="193"/>
        <end position="202"/>
    </location>
</feature>
<feature type="helix" evidence="2">
    <location>
        <begin position="206"/>
        <end position="219"/>
    </location>
</feature>
<feature type="strand" evidence="2">
    <location>
        <begin position="222"/>
        <end position="230"/>
    </location>
</feature>
<feature type="helix" evidence="2">
    <location>
        <begin position="240"/>
        <end position="254"/>
    </location>
</feature>
<feature type="strand" evidence="2">
    <location>
        <begin position="260"/>
        <end position="266"/>
    </location>
</feature>
<feature type="helix" evidence="2">
    <location>
        <begin position="274"/>
        <end position="287"/>
    </location>
</feature>
<feature type="strand" evidence="2">
    <location>
        <begin position="290"/>
        <end position="294"/>
    </location>
</feature>
<feature type="turn" evidence="2">
    <location>
        <begin position="296"/>
        <end position="299"/>
    </location>
</feature>
<feature type="helix" evidence="2">
    <location>
        <begin position="309"/>
        <end position="316"/>
    </location>
</feature>
<feature type="strand" evidence="2">
    <location>
        <begin position="326"/>
        <end position="329"/>
    </location>
</feature>
<feature type="strand" evidence="2">
    <location>
        <begin position="333"/>
        <end position="336"/>
    </location>
</feature>
<feature type="turn" evidence="2">
    <location>
        <begin position="337"/>
        <end position="340"/>
    </location>
</feature>
<feature type="strand" evidence="2">
    <location>
        <begin position="341"/>
        <end position="344"/>
    </location>
</feature>
<feature type="helix" evidence="2">
    <location>
        <begin position="345"/>
        <end position="347"/>
    </location>
</feature>
<feature type="helix" evidence="2">
    <location>
        <begin position="353"/>
        <end position="355"/>
    </location>
</feature>
<feature type="helix" evidence="2">
    <location>
        <begin position="361"/>
        <end position="369"/>
    </location>
</feature>
<feature type="turn" evidence="2">
    <location>
        <begin position="376"/>
        <end position="378"/>
    </location>
</feature>
<feature type="helix" evidence="2">
    <location>
        <begin position="381"/>
        <end position="393"/>
    </location>
</feature>
<reference key="1">
    <citation type="journal article" date="1997" name="Microbiology">
        <title>Towards the phylogeny of APS reductases and sirohaem sulfite reductases in sulfate-reducing and sulfur-oxidizing prokaryotes.</title>
        <authorList>
            <person name="Hipp W.M."/>
            <person name="Pott A.S."/>
            <person name="Thum-Schmitz N."/>
            <person name="Faath I."/>
            <person name="Dahl C."/>
            <person name="Trueper H.G."/>
        </authorList>
    </citation>
    <scope>NUCLEOTIDE SEQUENCE [GENOMIC DNA]</scope>
</reference>
<reference key="2">
    <citation type="journal article" date="2011" name="Stand. Genomic Sci.">
        <title>Complete genome sequence of Allochromatium vinosum DSM 180(T).</title>
        <authorList>
            <person name="Weissgerber T."/>
            <person name="Zigann R."/>
            <person name="Bruce D."/>
            <person name="Chang Y.J."/>
            <person name="Detter J.C."/>
            <person name="Han C."/>
            <person name="Hauser L."/>
            <person name="Jeffries C.D."/>
            <person name="Land M."/>
            <person name="Munk A.C."/>
            <person name="Tapia R."/>
            <person name="Dahl C."/>
        </authorList>
    </citation>
    <scope>NUCLEOTIDE SEQUENCE [LARGE SCALE GENOMIC DNA]</scope>
    <source>
        <strain>ATCC 17899 / DSM 180 / NBRC 103801 / NCIMB 10441 / D</strain>
    </source>
</reference>
<comment type="catalytic activity">
    <reaction>
        <text>sulfate + ATP + H(+) = adenosine 5'-phosphosulfate + diphosphate</text>
        <dbReference type="Rhea" id="RHEA:18133"/>
        <dbReference type="ChEBI" id="CHEBI:15378"/>
        <dbReference type="ChEBI" id="CHEBI:16189"/>
        <dbReference type="ChEBI" id="CHEBI:30616"/>
        <dbReference type="ChEBI" id="CHEBI:33019"/>
        <dbReference type="ChEBI" id="CHEBI:58243"/>
        <dbReference type="EC" id="2.7.7.4"/>
    </reaction>
</comment>
<comment type="pathway">
    <text>Sulfur metabolism; hydrogen sulfide biosynthesis; sulfite from sulfate: step 1/3.</text>
</comment>
<comment type="similarity">
    <text evidence="1">Belongs to the sulfate adenylyltransferase family.</text>
</comment>
<keyword id="KW-0002">3D-structure</keyword>
<keyword id="KW-0067">ATP-binding</keyword>
<keyword id="KW-0547">Nucleotide-binding</keyword>
<keyword id="KW-0548">Nucleotidyltransferase</keyword>
<keyword id="KW-1185">Reference proteome</keyword>
<keyword id="KW-0808">Transferase</keyword>
<gene>
    <name type="primary">sat</name>
    <name type="ordered locus">Alvin_1118</name>
</gene>
<sequence length="397" mass="43762">MIKPVGSDELRPRFVYDPEQHHRLSSEAESLPSVIVSSQAAGNAVMLGAGYFSPLDGFMNLADALSSAQSMTLTDGRFFPVPLLCLLESADAIAGATRIALRDPNVEGNPVLAVMDVTAVEQVSDAQMALMTEQVYGTSDPKHPGVETFNSQGRTAISGPIQVLNFSYFQTDFPDTFRTAVEIRHEIQERGWQKIVAFQTRNPMHRAHEELCKMAMEAVEADGVVIHMLLGQLKPGDIPAPVRDAAIRTMAELYFPPNTVMVTGYGFDMLYAGPREAVLHAYFRQNMGATHFIIGRDHAGVGDYYGPFDAQTIFDDAVPTDVLAIEIFRADNTAYSKKLGRVVMMRDAPDHTPDDFIQLSGTRVREMLGQGEAPPPEFSRPEVAQILMDYYRSLPQS</sequence>
<evidence type="ECO:0000305" key="1"/>
<evidence type="ECO:0007829" key="2">
    <source>
        <dbReference type="PDB" id="4DNX"/>
    </source>
</evidence>
<protein>
    <recommendedName>
        <fullName>Sulfate adenylyltransferase</fullName>
        <ecNumber>2.7.7.4</ecNumber>
    </recommendedName>
    <alternativeName>
        <fullName>ATP-sulfurylase</fullName>
    </alternativeName>
    <alternativeName>
        <fullName>Sulfate adenylate transferase</fullName>
        <shortName>SAT</shortName>
    </alternativeName>
</protein>
<accession>O66036</accession>
<accession>D3RS98</accession>
<name>SAT_ALLVD</name>
<organism>
    <name type="scientific">Allochromatium vinosum (strain ATCC 17899 / DSM 180 / NBRC 103801 / NCIMB 10441 / D)</name>
    <name type="common">Chromatium vinosum</name>
    <dbReference type="NCBI Taxonomy" id="572477"/>
    <lineage>
        <taxon>Bacteria</taxon>
        <taxon>Pseudomonadati</taxon>
        <taxon>Pseudomonadota</taxon>
        <taxon>Gammaproteobacteria</taxon>
        <taxon>Chromatiales</taxon>
        <taxon>Chromatiaceae</taxon>
        <taxon>Allochromatium</taxon>
    </lineage>
</organism>
<proteinExistence type="evidence at protein level"/>
<dbReference type="EC" id="2.7.7.4"/>
<dbReference type="EMBL" id="U84759">
    <property type="protein sequence ID" value="AAC23622.1"/>
    <property type="molecule type" value="Genomic_DNA"/>
</dbReference>
<dbReference type="EMBL" id="CP001896">
    <property type="protein sequence ID" value="ADC62057.1"/>
    <property type="molecule type" value="Genomic_DNA"/>
</dbReference>
<dbReference type="RefSeq" id="WP_012970332.1">
    <property type="nucleotide sequence ID" value="NC_013851.1"/>
</dbReference>
<dbReference type="PDB" id="4DNX">
    <property type="method" value="X-ray"/>
    <property type="resolution" value="1.60 A"/>
    <property type="chains" value="A/B=1-397"/>
</dbReference>
<dbReference type="PDBsum" id="4DNX"/>
<dbReference type="SMR" id="O66036"/>
<dbReference type="STRING" id="572477.Alvin_1118"/>
<dbReference type="KEGG" id="alv:Alvin_1118"/>
<dbReference type="eggNOG" id="COG2046">
    <property type="taxonomic scope" value="Bacteria"/>
</dbReference>
<dbReference type="HOGENOM" id="CLU_022950_1_1_6"/>
<dbReference type="OrthoDB" id="9804504at2"/>
<dbReference type="BioCyc" id="MetaCyc:MONOMER-16062"/>
<dbReference type="BRENDA" id="2.7.7.4">
    <property type="organism ID" value="257"/>
</dbReference>
<dbReference type="UniPathway" id="UPA00140">
    <property type="reaction ID" value="UER00204"/>
</dbReference>
<dbReference type="EvolutionaryTrace" id="O66036"/>
<dbReference type="Proteomes" id="UP000001441">
    <property type="component" value="Chromosome"/>
</dbReference>
<dbReference type="GO" id="GO:0005524">
    <property type="term" value="F:ATP binding"/>
    <property type="evidence" value="ECO:0007669"/>
    <property type="project" value="UniProtKB-KW"/>
</dbReference>
<dbReference type="GO" id="GO:0004781">
    <property type="term" value="F:sulfate adenylyltransferase (ATP) activity"/>
    <property type="evidence" value="ECO:0007669"/>
    <property type="project" value="UniProtKB-UniRule"/>
</dbReference>
<dbReference type="GO" id="GO:0070814">
    <property type="term" value="P:hydrogen sulfide biosynthetic process"/>
    <property type="evidence" value="ECO:0007669"/>
    <property type="project" value="UniProtKB-UniRule"/>
</dbReference>
<dbReference type="GO" id="GO:0000103">
    <property type="term" value="P:sulfate assimilation"/>
    <property type="evidence" value="ECO:0007669"/>
    <property type="project" value="UniProtKB-UniRule"/>
</dbReference>
<dbReference type="CDD" id="cd00517">
    <property type="entry name" value="ATPS"/>
    <property type="match status" value="1"/>
</dbReference>
<dbReference type="Gene3D" id="3.40.50.620">
    <property type="entry name" value="HUPs"/>
    <property type="match status" value="1"/>
</dbReference>
<dbReference type="Gene3D" id="3.10.400.10">
    <property type="entry name" value="Sulfate adenylyltransferase"/>
    <property type="match status" value="1"/>
</dbReference>
<dbReference type="HAMAP" id="MF_00066">
    <property type="entry name" value="Sulf_adenylyltr"/>
    <property type="match status" value="1"/>
</dbReference>
<dbReference type="InterPro" id="IPR025980">
    <property type="entry name" value="ATP-Sase_PUA-like_dom"/>
</dbReference>
<dbReference type="InterPro" id="IPR015947">
    <property type="entry name" value="PUA-like_sf"/>
</dbReference>
<dbReference type="InterPro" id="IPR014729">
    <property type="entry name" value="Rossmann-like_a/b/a_fold"/>
</dbReference>
<dbReference type="InterPro" id="IPR020792">
    <property type="entry name" value="SO4_adenylyltransferase_pro"/>
</dbReference>
<dbReference type="InterPro" id="IPR024951">
    <property type="entry name" value="Sulfurylase_cat_dom"/>
</dbReference>
<dbReference type="InterPro" id="IPR002650">
    <property type="entry name" value="Sulphate_adenylyltransferase"/>
</dbReference>
<dbReference type="NCBIfam" id="TIGR00339">
    <property type="entry name" value="sopT"/>
    <property type="match status" value="1"/>
</dbReference>
<dbReference type="PANTHER" id="PTHR43509">
    <property type="match status" value="1"/>
</dbReference>
<dbReference type="PANTHER" id="PTHR43509:SF1">
    <property type="entry name" value="SULFATE ADENYLYLTRANSFERASE"/>
    <property type="match status" value="1"/>
</dbReference>
<dbReference type="Pfam" id="PF01747">
    <property type="entry name" value="ATP-sulfurylase"/>
    <property type="match status" value="1"/>
</dbReference>
<dbReference type="Pfam" id="PF14306">
    <property type="entry name" value="PUA_2"/>
    <property type="match status" value="1"/>
</dbReference>
<dbReference type="SUPFAM" id="SSF52374">
    <property type="entry name" value="Nucleotidylyl transferase"/>
    <property type="match status" value="1"/>
</dbReference>
<dbReference type="SUPFAM" id="SSF88697">
    <property type="entry name" value="PUA domain-like"/>
    <property type="match status" value="1"/>
</dbReference>